<evidence type="ECO:0000255" key="1">
    <source>
        <dbReference type="HAMAP-Rule" id="MF_00048"/>
    </source>
</evidence>
<accession>A9MPP3</accession>
<gene>
    <name evidence="1" type="primary">yraN</name>
    <name type="ordered locus">SARI_04357</name>
</gene>
<name>YRAN_SALAR</name>
<organism>
    <name type="scientific">Salmonella arizonae (strain ATCC BAA-731 / CDC346-86 / RSK2980)</name>
    <dbReference type="NCBI Taxonomy" id="41514"/>
    <lineage>
        <taxon>Bacteria</taxon>
        <taxon>Pseudomonadati</taxon>
        <taxon>Pseudomonadota</taxon>
        <taxon>Gammaproteobacteria</taxon>
        <taxon>Enterobacterales</taxon>
        <taxon>Enterobacteriaceae</taxon>
        <taxon>Salmonella</taxon>
    </lineage>
</organism>
<protein>
    <recommendedName>
        <fullName evidence="1">UPF0102 protein YraN</fullName>
    </recommendedName>
</protein>
<sequence>MAQIPARGNYSRQLTCKQAGDAWEAAARRWLESKGLRFIAANVRVRGGEIDLIMRDGKTTVFVEVRYRRSGLYGGAAASVTRSKQHKLLHTAHLWLARQNGSFDTVDCRFDVLAFTGNEIEWFRDAFNDHS</sequence>
<feature type="chain" id="PRO_1000074820" description="UPF0102 protein YraN">
    <location>
        <begin position="1"/>
        <end position="131"/>
    </location>
</feature>
<keyword id="KW-1185">Reference proteome</keyword>
<comment type="similarity">
    <text evidence="1">Belongs to the UPF0102 family.</text>
</comment>
<proteinExistence type="inferred from homology"/>
<dbReference type="EMBL" id="CP000880">
    <property type="protein sequence ID" value="ABX24136.1"/>
    <property type="molecule type" value="Genomic_DNA"/>
</dbReference>
<dbReference type="SMR" id="A9MPP3"/>
<dbReference type="STRING" id="41514.SARI_04357"/>
<dbReference type="KEGG" id="ses:SARI_04357"/>
<dbReference type="HOGENOM" id="CLU_115353_1_0_6"/>
<dbReference type="Proteomes" id="UP000002084">
    <property type="component" value="Chromosome"/>
</dbReference>
<dbReference type="GO" id="GO:0003676">
    <property type="term" value="F:nucleic acid binding"/>
    <property type="evidence" value="ECO:0007669"/>
    <property type="project" value="InterPro"/>
</dbReference>
<dbReference type="CDD" id="cd20736">
    <property type="entry name" value="PoNe_Nuclease"/>
    <property type="match status" value="1"/>
</dbReference>
<dbReference type="Gene3D" id="3.40.1350.10">
    <property type="match status" value="1"/>
</dbReference>
<dbReference type="HAMAP" id="MF_00048">
    <property type="entry name" value="UPF0102"/>
    <property type="match status" value="1"/>
</dbReference>
<dbReference type="InterPro" id="IPR011335">
    <property type="entry name" value="Restrct_endonuc-II-like"/>
</dbReference>
<dbReference type="InterPro" id="IPR011856">
    <property type="entry name" value="tRNA_endonuc-like_dom_sf"/>
</dbReference>
<dbReference type="InterPro" id="IPR003509">
    <property type="entry name" value="UPF0102_YraN-like"/>
</dbReference>
<dbReference type="NCBIfam" id="NF009150">
    <property type="entry name" value="PRK12497.1-3"/>
    <property type="match status" value="1"/>
</dbReference>
<dbReference type="NCBIfam" id="TIGR00252">
    <property type="entry name" value="YraN family protein"/>
    <property type="match status" value="1"/>
</dbReference>
<dbReference type="PANTHER" id="PTHR34039">
    <property type="entry name" value="UPF0102 PROTEIN YRAN"/>
    <property type="match status" value="1"/>
</dbReference>
<dbReference type="PANTHER" id="PTHR34039:SF1">
    <property type="entry name" value="UPF0102 PROTEIN YRAN"/>
    <property type="match status" value="1"/>
</dbReference>
<dbReference type="Pfam" id="PF02021">
    <property type="entry name" value="UPF0102"/>
    <property type="match status" value="1"/>
</dbReference>
<dbReference type="SUPFAM" id="SSF52980">
    <property type="entry name" value="Restriction endonuclease-like"/>
    <property type="match status" value="1"/>
</dbReference>
<reference key="1">
    <citation type="submission" date="2007-11" db="EMBL/GenBank/DDBJ databases">
        <authorList>
            <consortium name="The Salmonella enterica serovar Arizonae Genome Sequencing Project"/>
            <person name="McClelland M."/>
            <person name="Sanderson E.K."/>
            <person name="Porwollik S."/>
            <person name="Spieth J."/>
            <person name="Clifton W.S."/>
            <person name="Fulton R."/>
            <person name="Chunyan W."/>
            <person name="Wollam A."/>
            <person name="Shah N."/>
            <person name="Pepin K."/>
            <person name="Bhonagiri V."/>
            <person name="Nash W."/>
            <person name="Johnson M."/>
            <person name="Thiruvilangam P."/>
            <person name="Wilson R."/>
        </authorList>
    </citation>
    <scope>NUCLEOTIDE SEQUENCE [LARGE SCALE GENOMIC DNA]</scope>
    <source>
        <strain>ATCC BAA-731 / CDC346-86 / RSK2980</strain>
    </source>
</reference>